<proteinExistence type="inferred from homology"/>
<name>LPXH_ECOK1</name>
<evidence type="ECO:0000255" key="1">
    <source>
        <dbReference type="HAMAP-Rule" id="MF_00575"/>
    </source>
</evidence>
<sequence>MATLFIADLHLCVEEPAITAGFLRFLAGEARKADALYILGDLFEAWIGDDDPNPLHHQMAAAIKAVSDSGVPCYFIHGNRDFLLGKRFARESGMTLLPEEKVLELYGRRVLIMHGDTLCTDDAGYQAFRAKVHKPWLQTLFLALPLFVRKRIAARMRANSKEANSSKSLAIMDVNQNAVVSAMEKHQVQWLIHGHTHRPAVHELIANQQPAFRVVLGAWHTEGSMVKVTADDVELIHFPF</sequence>
<keyword id="KW-0997">Cell inner membrane</keyword>
<keyword id="KW-1003">Cell membrane</keyword>
<keyword id="KW-0378">Hydrolase</keyword>
<keyword id="KW-0441">Lipid A biosynthesis</keyword>
<keyword id="KW-0444">Lipid biosynthesis</keyword>
<keyword id="KW-0443">Lipid metabolism</keyword>
<keyword id="KW-0464">Manganese</keyword>
<keyword id="KW-0472">Membrane</keyword>
<keyword id="KW-0479">Metal-binding</keyword>
<keyword id="KW-1185">Reference proteome</keyword>
<organism>
    <name type="scientific">Escherichia coli O1:K1 / APEC</name>
    <dbReference type="NCBI Taxonomy" id="405955"/>
    <lineage>
        <taxon>Bacteria</taxon>
        <taxon>Pseudomonadati</taxon>
        <taxon>Pseudomonadota</taxon>
        <taxon>Gammaproteobacteria</taxon>
        <taxon>Enterobacterales</taxon>
        <taxon>Enterobacteriaceae</taxon>
        <taxon>Escherichia</taxon>
    </lineage>
</organism>
<comment type="function">
    <text evidence="1">Hydrolyzes the pyrophosphate bond of UDP-2,3-diacylglucosamine to yield 2,3-diacylglucosamine 1-phosphate (lipid X) and UMP by catalyzing the attack of water at the alpha-P atom. Involved in the biosynthesis of lipid A, a phosphorylated glycolipid that anchors the lipopolysaccharide to the outer membrane of the cell.</text>
</comment>
<comment type="catalytic activity">
    <reaction evidence="1">
        <text>UDP-2-N,3-O-bis[(3R)-3-hydroxytetradecanoyl]-alpha-D-glucosamine + H2O = 2-N,3-O-bis[(3R)-3-hydroxytetradecanoyl]-alpha-D-glucosaminyl 1-phosphate + UMP + 2 H(+)</text>
        <dbReference type="Rhea" id="RHEA:25213"/>
        <dbReference type="ChEBI" id="CHEBI:15377"/>
        <dbReference type="ChEBI" id="CHEBI:15378"/>
        <dbReference type="ChEBI" id="CHEBI:57865"/>
        <dbReference type="ChEBI" id="CHEBI:57957"/>
        <dbReference type="ChEBI" id="CHEBI:78847"/>
        <dbReference type="EC" id="3.6.1.54"/>
    </reaction>
</comment>
<comment type="cofactor">
    <cofactor evidence="1">
        <name>Mn(2+)</name>
        <dbReference type="ChEBI" id="CHEBI:29035"/>
    </cofactor>
    <text evidence="1">Binds 2 Mn(2+) ions per subunit in a binuclear metal center.</text>
</comment>
<comment type="pathway">
    <text evidence="1">Glycolipid biosynthesis; lipid IV(A) biosynthesis; lipid IV(A) from (3R)-3-hydroxytetradecanoyl-[acyl-carrier-protein] and UDP-N-acetyl-alpha-D-glucosamine: step 4/6.</text>
</comment>
<comment type="subcellular location">
    <subcellularLocation>
        <location evidence="1">Cell inner membrane</location>
        <topology evidence="1">Peripheral membrane protein</topology>
        <orientation evidence="1">Cytoplasmic side</orientation>
    </subcellularLocation>
</comment>
<comment type="similarity">
    <text evidence="1">Belongs to the LpxH family.</text>
</comment>
<reference key="1">
    <citation type="journal article" date="2007" name="J. Bacteriol.">
        <title>The genome sequence of avian pathogenic Escherichia coli strain O1:K1:H7 shares strong similarities with human extraintestinal pathogenic E. coli genomes.</title>
        <authorList>
            <person name="Johnson T.J."/>
            <person name="Kariyawasam S."/>
            <person name="Wannemuehler Y."/>
            <person name="Mangiamele P."/>
            <person name="Johnson S.J."/>
            <person name="Doetkott C."/>
            <person name="Skyberg J.A."/>
            <person name="Lynne A.M."/>
            <person name="Johnson J.R."/>
            <person name="Nolan L.K."/>
        </authorList>
    </citation>
    <scope>NUCLEOTIDE SEQUENCE [LARGE SCALE GENOMIC DNA]</scope>
</reference>
<protein>
    <recommendedName>
        <fullName evidence="1">UDP-2,3-diacylglucosamine hydrolase</fullName>
        <ecNumber evidence="1">3.6.1.54</ecNumber>
    </recommendedName>
    <alternativeName>
        <fullName evidence="1">UDP-2,3-diacylglucosamine diphosphatase</fullName>
    </alternativeName>
</protein>
<feature type="chain" id="PRO_1000025050" description="UDP-2,3-diacylglucosamine hydrolase">
    <location>
        <begin position="1"/>
        <end position="240"/>
    </location>
</feature>
<feature type="binding site" evidence="1">
    <location>
        <position position="8"/>
    </location>
    <ligand>
        <name>Mn(2+)</name>
        <dbReference type="ChEBI" id="CHEBI:29035"/>
        <label>1</label>
    </ligand>
</feature>
<feature type="binding site" evidence="1">
    <location>
        <position position="10"/>
    </location>
    <ligand>
        <name>Mn(2+)</name>
        <dbReference type="ChEBI" id="CHEBI:29035"/>
        <label>1</label>
    </ligand>
</feature>
<feature type="binding site" evidence="1">
    <location>
        <position position="41"/>
    </location>
    <ligand>
        <name>Mn(2+)</name>
        <dbReference type="ChEBI" id="CHEBI:29035"/>
        <label>1</label>
    </ligand>
</feature>
<feature type="binding site" evidence="1">
    <location>
        <position position="41"/>
    </location>
    <ligand>
        <name>Mn(2+)</name>
        <dbReference type="ChEBI" id="CHEBI:29035"/>
        <label>2</label>
    </ligand>
</feature>
<feature type="binding site" evidence="1">
    <location>
        <begin position="79"/>
        <end position="80"/>
    </location>
    <ligand>
        <name>substrate</name>
    </ligand>
</feature>
<feature type="binding site" evidence="1">
    <location>
        <position position="79"/>
    </location>
    <ligand>
        <name>Mn(2+)</name>
        <dbReference type="ChEBI" id="CHEBI:29035"/>
        <label>2</label>
    </ligand>
</feature>
<feature type="binding site" evidence="1">
    <location>
        <position position="114"/>
    </location>
    <ligand>
        <name>Mn(2+)</name>
        <dbReference type="ChEBI" id="CHEBI:29035"/>
        <label>2</label>
    </ligand>
</feature>
<feature type="binding site" evidence="1">
    <location>
        <position position="122"/>
    </location>
    <ligand>
        <name>substrate</name>
    </ligand>
</feature>
<feature type="binding site" evidence="1">
    <location>
        <position position="160"/>
    </location>
    <ligand>
        <name>substrate</name>
    </ligand>
</feature>
<feature type="binding site" evidence="1">
    <location>
        <position position="164"/>
    </location>
    <ligand>
        <name>substrate</name>
    </ligand>
</feature>
<feature type="binding site" evidence="1">
    <location>
        <position position="167"/>
    </location>
    <ligand>
        <name>substrate</name>
    </ligand>
</feature>
<feature type="binding site" evidence="1">
    <location>
        <position position="195"/>
    </location>
    <ligand>
        <name>Mn(2+)</name>
        <dbReference type="ChEBI" id="CHEBI:29035"/>
        <label>2</label>
    </ligand>
</feature>
<feature type="binding site" evidence="1">
    <location>
        <position position="195"/>
    </location>
    <ligand>
        <name>substrate</name>
    </ligand>
</feature>
<feature type="binding site" evidence="1">
    <location>
        <position position="197"/>
    </location>
    <ligand>
        <name>Mn(2+)</name>
        <dbReference type="ChEBI" id="CHEBI:29035"/>
        <label>1</label>
    </ligand>
</feature>
<accession>A1A8J0</accession>
<gene>
    <name evidence="1" type="primary">lpxH</name>
    <name type="ordered locus">Ecok1_04860</name>
    <name type="ORF">APECO1_1490</name>
</gene>
<dbReference type="EC" id="3.6.1.54" evidence="1"/>
<dbReference type="EMBL" id="CP000468">
    <property type="protein sequence ID" value="ABI99979.1"/>
    <property type="molecule type" value="Genomic_DNA"/>
</dbReference>
<dbReference type="RefSeq" id="WP_000212244.1">
    <property type="nucleotide sequence ID" value="NZ_CADILS010000009.1"/>
</dbReference>
<dbReference type="SMR" id="A1A8J0"/>
<dbReference type="KEGG" id="ecv:APECO1_1490"/>
<dbReference type="HOGENOM" id="CLU_074586_0_0_6"/>
<dbReference type="UniPathway" id="UPA00359">
    <property type="reaction ID" value="UER00480"/>
</dbReference>
<dbReference type="Proteomes" id="UP000008216">
    <property type="component" value="Chromosome"/>
</dbReference>
<dbReference type="GO" id="GO:0005737">
    <property type="term" value="C:cytoplasm"/>
    <property type="evidence" value="ECO:0007669"/>
    <property type="project" value="InterPro"/>
</dbReference>
<dbReference type="GO" id="GO:0019897">
    <property type="term" value="C:extrinsic component of plasma membrane"/>
    <property type="evidence" value="ECO:0007669"/>
    <property type="project" value="UniProtKB-UniRule"/>
</dbReference>
<dbReference type="GO" id="GO:0030145">
    <property type="term" value="F:manganese ion binding"/>
    <property type="evidence" value="ECO:0007669"/>
    <property type="project" value="UniProtKB-UniRule"/>
</dbReference>
<dbReference type="GO" id="GO:0008758">
    <property type="term" value="F:UDP-2,3-diacylglucosamine hydrolase activity"/>
    <property type="evidence" value="ECO:0007669"/>
    <property type="project" value="UniProtKB-UniRule"/>
</dbReference>
<dbReference type="GO" id="GO:0009245">
    <property type="term" value="P:lipid A biosynthetic process"/>
    <property type="evidence" value="ECO:0007669"/>
    <property type="project" value="UniProtKB-UniRule"/>
</dbReference>
<dbReference type="CDD" id="cd07398">
    <property type="entry name" value="MPP_YbbF-LpxH"/>
    <property type="match status" value="1"/>
</dbReference>
<dbReference type="FunFam" id="3.60.21.10:FF:000012">
    <property type="entry name" value="UDP-2,3-diacylglucosamine hydrolase"/>
    <property type="match status" value="1"/>
</dbReference>
<dbReference type="Gene3D" id="3.60.21.10">
    <property type="match status" value="1"/>
</dbReference>
<dbReference type="HAMAP" id="MF_00575">
    <property type="entry name" value="LpxH"/>
    <property type="match status" value="1"/>
</dbReference>
<dbReference type="InterPro" id="IPR004843">
    <property type="entry name" value="Calcineurin-like_PHP_ApaH"/>
</dbReference>
<dbReference type="InterPro" id="IPR043461">
    <property type="entry name" value="LpxH-like"/>
</dbReference>
<dbReference type="InterPro" id="IPR029052">
    <property type="entry name" value="Metallo-depent_PP-like"/>
</dbReference>
<dbReference type="InterPro" id="IPR010138">
    <property type="entry name" value="UDP-diacylglucosamine_Hdrlase"/>
</dbReference>
<dbReference type="NCBIfam" id="TIGR01854">
    <property type="entry name" value="lipid_A_lpxH"/>
    <property type="match status" value="1"/>
</dbReference>
<dbReference type="NCBIfam" id="NF003743">
    <property type="entry name" value="PRK05340.1"/>
    <property type="match status" value="1"/>
</dbReference>
<dbReference type="PANTHER" id="PTHR34990:SF1">
    <property type="entry name" value="UDP-2,3-DIACYLGLUCOSAMINE HYDROLASE"/>
    <property type="match status" value="1"/>
</dbReference>
<dbReference type="PANTHER" id="PTHR34990">
    <property type="entry name" value="UDP-2,3-DIACYLGLUCOSAMINE HYDROLASE-RELATED"/>
    <property type="match status" value="1"/>
</dbReference>
<dbReference type="Pfam" id="PF00149">
    <property type="entry name" value="Metallophos"/>
    <property type="match status" value="1"/>
</dbReference>
<dbReference type="SUPFAM" id="SSF56300">
    <property type="entry name" value="Metallo-dependent phosphatases"/>
    <property type="match status" value="1"/>
</dbReference>